<evidence type="ECO:0000255" key="1">
    <source>
        <dbReference type="HAMAP-Rule" id="MF_01371"/>
    </source>
</evidence>
<evidence type="ECO:0000305" key="2"/>
<protein>
    <recommendedName>
        <fullName evidence="1">Large ribosomal subunit protein uL30</fullName>
    </recommendedName>
    <alternativeName>
        <fullName evidence="2">50S ribosomal protein L30</fullName>
    </alternativeName>
</protein>
<organism>
    <name type="scientific">Methylobacterium sp. (strain 4-46)</name>
    <dbReference type="NCBI Taxonomy" id="426117"/>
    <lineage>
        <taxon>Bacteria</taxon>
        <taxon>Pseudomonadati</taxon>
        <taxon>Pseudomonadota</taxon>
        <taxon>Alphaproteobacteria</taxon>
        <taxon>Hyphomicrobiales</taxon>
        <taxon>Methylobacteriaceae</taxon>
        <taxon>Methylobacterium</taxon>
    </lineage>
</organism>
<dbReference type="EMBL" id="CP000943">
    <property type="protein sequence ID" value="ACA14906.1"/>
    <property type="molecule type" value="Genomic_DNA"/>
</dbReference>
<dbReference type="RefSeq" id="WP_012330324.1">
    <property type="nucleotide sequence ID" value="NC_010511.1"/>
</dbReference>
<dbReference type="SMR" id="B0UHV1"/>
<dbReference type="STRING" id="426117.M446_0335"/>
<dbReference type="KEGG" id="met:M446_0335"/>
<dbReference type="eggNOG" id="COG1841">
    <property type="taxonomic scope" value="Bacteria"/>
</dbReference>
<dbReference type="HOGENOM" id="CLU_131047_1_2_5"/>
<dbReference type="GO" id="GO:0022625">
    <property type="term" value="C:cytosolic large ribosomal subunit"/>
    <property type="evidence" value="ECO:0007669"/>
    <property type="project" value="TreeGrafter"/>
</dbReference>
<dbReference type="GO" id="GO:0003735">
    <property type="term" value="F:structural constituent of ribosome"/>
    <property type="evidence" value="ECO:0007669"/>
    <property type="project" value="InterPro"/>
</dbReference>
<dbReference type="GO" id="GO:0006412">
    <property type="term" value="P:translation"/>
    <property type="evidence" value="ECO:0007669"/>
    <property type="project" value="UniProtKB-UniRule"/>
</dbReference>
<dbReference type="CDD" id="cd01658">
    <property type="entry name" value="Ribosomal_L30"/>
    <property type="match status" value="1"/>
</dbReference>
<dbReference type="Gene3D" id="3.30.1390.20">
    <property type="entry name" value="Ribosomal protein L30, ferredoxin-like fold domain"/>
    <property type="match status" value="1"/>
</dbReference>
<dbReference type="HAMAP" id="MF_01371_B">
    <property type="entry name" value="Ribosomal_uL30_B"/>
    <property type="match status" value="1"/>
</dbReference>
<dbReference type="InterPro" id="IPR036919">
    <property type="entry name" value="Ribo_uL30_ferredoxin-like_sf"/>
</dbReference>
<dbReference type="InterPro" id="IPR005996">
    <property type="entry name" value="Ribosomal_uL30_bac-type"/>
</dbReference>
<dbReference type="InterPro" id="IPR016082">
    <property type="entry name" value="Ribosomal_uL30_ferredoxin-like"/>
</dbReference>
<dbReference type="NCBIfam" id="TIGR01308">
    <property type="entry name" value="rpmD_bact"/>
    <property type="match status" value="1"/>
</dbReference>
<dbReference type="PANTHER" id="PTHR15892:SF2">
    <property type="entry name" value="LARGE RIBOSOMAL SUBUNIT PROTEIN UL30M"/>
    <property type="match status" value="1"/>
</dbReference>
<dbReference type="PANTHER" id="PTHR15892">
    <property type="entry name" value="MITOCHONDRIAL RIBOSOMAL PROTEIN L30"/>
    <property type="match status" value="1"/>
</dbReference>
<dbReference type="Pfam" id="PF00327">
    <property type="entry name" value="Ribosomal_L30"/>
    <property type="match status" value="1"/>
</dbReference>
<dbReference type="PIRSF" id="PIRSF002211">
    <property type="entry name" value="Ribosomal_L30_bac-type"/>
    <property type="match status" value="1"/>
</dbReference>
<dbReference type="SUPFAM" id="SSF55129">
    <property type="entry name" value="Ribosomal protein L30p/L7e"/>
    <property type="match status" value="1"/>
</dbReference>
<proteinExistence type="inferred from homology"/>
<reference key="1">
    <citation type="submission" date="2008-02" db="EMBL/GenBank/DDBJ databases">
        <title>Complete sequence of chromosome of Methylobacterium sp. 4-46.</title>
        <authorList>
            <consortium name="US DOE Joint Genome Institute"/>
            <person name="Copeland A."/>
            <person name="Lucas S."/>
            <person name="Lapidus A."/>
            <person name="Glavina del Rio T."/>
            <person name="Dalin E."/>
            <person name="Tice H."/>
            <person name="Bruce D."/>
            <person name="Goodwin L."/>
            <person name="Pitluck S."/>
            <person name="Chertkov O."/>
            <person name="Brettin T."/>
            <person name="Detter J.C."/>
            <person name="Han C."/>
            <person name="Kuske C.R."/>
            <person name="Schmutz J."/>
            <person name="Larimer F."/>
            <person name="Land M."/>
            <person name="Hauser L."/>
            <person name="Kyrpides N."/>
            <person name="Ivanova N."/>
            <person name="Marx C.J."/>
            <person name="Richardson P."/>
        </authorList>
    </citation>
    <scope>NUCLEOTIDE SEQUENCE [LARGE SCALE GENOMIC DNA]</scope>
    <source>
        <strain>4-46</strain>
    </source>
</reference>
<feature type="chain" id="PRO_0000347119" description="Large ribosomal subunit protein uL30">
    <location>
        <begin position="1"/>
        <end position="63"/>
    </location>
</feature>
<gene>
    <name evidence="1" type="primary">rpmD</name>
    <name type="ordered locus">M446_0335</name>
</gene>
<name>RL30_METS4</name>
<keyword id="KW-0687">Ribonucleoprotein</keyword>
<keyword id="KW-0689">Ribosomal protein</keyword>
<accession>B0UHV1</accession>
<comment type="subunit">
    <text evidence="1">Part of the 50S ribosomal subunit.</text>
</comment>
<comment type="similarity">
    <text evidence="1">Belongs to the universal ribosomal protein uL30 family.</text>
</comment>
<sequence>MAEKTVRVQQIGSPIRREASQRETLIGLKLNKLHRIAELPDTPSVRGMIAKVHHLVRVLDGAA</sequence>